<evidence type="ECO:0000255" key="1">
    <source>
        <dbReference type="HAMAP-Rule" id="MF_01561"/>
    </source>
</evidence>
<proteinExistence type="inferred from homology"/>
<keyword id="KW-0378">Hydrolase</keyword>
<keyword id="KW-0479">Metal-binding</keyword>
<keyword id="KW-0862">Zinc</keyword>
<protein>
    <recommendedName>
        <fullName evidence="1">Probable phosphatase YPTB2019</fullName>
        <ecNumber evidence="1">3.1.3.-</ecNumber>
    </recommendedName>
</protein>
<reference key="1">
    <citation type="journal article" date="2004" name="Proc. Natl. Acad. Sci. U.S.A.">
        <title>Insights into the evolution of Yersinia pestis through whole-genome comparison with Yersinia pseudotuberculosis.</title>
        <authorList>
            <person name="Chain P.S.G."/>
            <person name="Carniel E."/>
            <person name="Larimer F.W."/>
            <person name="Lamerdin J."/>
            <person name="Stoutland P.O."/>
            <person name="Regala W.M."/>
            <person name="Georgescu A.M."/>
            <person name="Vergez L.M."/>
            <person name="Land M.L."/>
            <person name="Motin V.L."/>
            <person name="Brubaker R.R."/>
            <person name="Fowler J."/>
            <person name="Hinnebusch J."/>
            <person name="Marceau M."/>
            <person name="Medigue C."/>
            <person name="Simonet M."/>
            <person name="Chenal-Francisque V."/>
            <person name="Souza B."/>
            <person name="Dacheux D."/>
            <person name="Elliott J.M."/>
            <person name="Derbise A."/>
            <person name="Hauser L.J."/>
            <person name="Garcia E."/>
        </authorList>
    </citation>
    <scope>NUCLEOTIDE SEQUENCE [LARGE SCALE GENOMIC DNA]</scope>
    <source>
        <strain>IP32953</strain>
    </source>
</reference>
<gene>
    <name type="ordered locus">YPTB2019</name>
</gene>
<comment type="cofactor">
    <cofactor evidence="1">
        <name>Zn(2+)</name>
        <dbReference type="ChEBI" id="CHEBI:29105"/>
    </cofactor>
    <text evidence="1">Binds 3 Zn(2+) ions per subunit.</text>
</comment>
<comment type="subunit">
    <text evidence="1">Homotrimer.</text>
</comment>
<comment type="similarity">
    <text evidence="1">Belongs to the PHP family.</text>
</comment>
<feature type="chain" id="PRO_0000228714" description="Probable phosphatase YPTB2019">
    <location>
        <begin position="1"/>
        <end position="245"/>
    </location>
</feature>
<feature type="binding site" evidence="1">
    <location>
        <position position="7"/>
    </location>
    <ligand>
        <name>Zn(2+)</name>
        <dbReference type="ChEBI" id="CHEBI:29105"/>
        <label>1</label>
    </ligand>
</feature>
<feature type="binding site" evidence="1">
    <location>
        <position position="9"/>
    </location>
    <ligand>
        <name>Zn(2+)</name>
        <dbReference type="ChEBI" id="CHEBI:29105"/>
        <label>1</label>
    </ligand>
</feature>
<feature type="binding site" evidence="1">
    <location>
        <position position="15"/>
    </location>
    <ligand>
        <name>Zn(2+)</name>
        <dbReference type="ChEBI" id="CHEBI:29105"/>
        <label>2</label>
    </ligand>
</feature>
<feature type="binding site" evidence="1">
    <location>
        <position position="40"/>
    </location>
    <ligand>
        <name>Zn(2+)</name>
        <dbReference type="ChEBI" id="CHEBI:29105"/>
        <label>2</label>
    </ligand>
</feature>
<feature type="binding site" evidence="1">
    <location>
        <position position="73"/>
    </location>
    <ligand>
        <name>Zn(2+)</name>
        <dbReference type="ChEBI" id="CHEBI:29105"/>
        <label>1</label>
    </ligand>
</feature>
<feature type="binding site" evidence="1">
    <location>
        <position position="73"/>
    </location>
    <ligand>
        <name>Zn(2+)</name>
        <dbReference type="ChEBI" id="CHEBI:29105"/>
        <label>3</label>
    </ligand>
</feature>
<feature type="binding site" evidence="1">
    <location>
        <position position="101"/>
    </location>
    <ligand>
        <name>Zn(2+)</name>
        <dbReference type="ChEBI" id="CHEBI:29105"/>
        <label>3</label>
    </ligand>
</feature>
<feature type="binding site" evidence="1">
    <location>
        <position position="131"/>
    </location>
    <ligand>
        <name>Zn(2+)</name>
        <dbReference type="ChEBI" id="CHEBI:29105"/>
        <label>3</label>
    </ligand>
</feature>
<feature type="binding site" evidence="1">
    <location>
        <position position="192"/>
    </location>
    <ligand>
        <name>Zn(2+)</name>
        <dbReference type="ChEBI" id="CHEBI:29105"/>
        <label>1</label>
    </ligand>
</feature>
<feature type="binding site" evidence="1">
    <location>
        <position position="194"/>
    </location>
    <ligand>
        <name>Zn(2+)</name>
        <dbReference type="ChEBI" id="CHEBI:29105"/>
        <label>2</label>
    </ligand>
</feature>
<sequence>MYPVDLHMHTVASTHAYSTLHDYIAEAKLKNIKLFAITDHGPDMADAPHYWHFMNMRVWPRLVDGVGILRGIEANIKNLDGDIDCTGPMLDAVDLLIAGFHEPVFPPQDKAANTQAMIATMAQGNVHIISHPGNPKYPVDIPAIAQAAAKYNVALELNNSSFAHSRKGSEANCRAIAAAVRDAGGWLALGSDSHIAYALGIFEHCERIIAEVNFPQERILNVSPRRLLDYLEQRGRPAIPELAEL</sequence>
<dbReference type="EC" id="3.1.3.-" evidence="1"/>
<dbReference type="EMBL" id="BX936398">
    <property type="protein sequence ID" value="CAH21257.1"/>
    <property type="molecule type" value="Genomic_DNA"/>
</dbReference>
<dbReference type="RefSeq" id="WP_002211221.1">
    <property type="nucleotide sequence ID" value="NZ_CP009712.1"/>
</dbReference>
<dbReference type="SMR" id="Q66AW1"/>
<dbReference type="KEGG" id="ypo:BZ17_446"/>
<dbReference type="KEGG" id="yps:YPTB2019"/>
<dbReference type="PATRIC" id="fig|273123.14.peg.476"/>
<dbReference type="Proteomes" id="UP000001011">
    <property type="component" value="Chromosome"/>
</dbReference>
<dbReference type="GO" id="GO:0005829">
    <property type="term" value="C:cytosol"/>
    <property type="evidence" value="ECO:0007669"/>
    <property type="project" value="TreeGrafter"/>
</dbReference>
<dbReference type="GO" id="GO:0016791">
    <property type="term" value="F:phosphatase activity"/>
    <property type="evidence" value="ECO:0007669"/>
    <property type="project" value="UniProtKB-UniRule"/>
</dbReference>
<dbReference type="GO" id="GO:0008270">
    <property type="term" value="F:zinc ion binding"/>
    <property type="evidence" value="ECO:0007669"/>
    <property type="project" value="UniProtKB-UniRule"/>
</dbReference>
<dbReference type="GO" id="GO:0071978">
    <property type="term" value="P:bacterial-type flagellum-dependent swarming motility"/>
    <property type="evidence" value="ECO:0007669"/>
    <property type="project" value="TreeGrafter"/>
</dbReference>
<dbReference type="CDD" id="cd07437">
    <property type="entry name" value="PHP_HisPPase_Ycdx_like"/>
    <property type="match status" value="1"/>
</dbReference>
<dbReference type="FunFam" id="3.20.20.140:FF:000008">
    <property type="entry name" value="Probable phosphatase YcdX"/>
    <property type="match status" value="1"/>
</dbReference>
<dbReference type="Gene3D" id="3.20.20.140">
    <property type="entry name" value="Metal-dependent hydrolases"/>
    <property type="match status" value="1"/>
</dbReference>
<dbReference type="HAMAP" id="MF_01561">
    <property type="entry name" value="YcdX_phosphat"/>
    <property type="match status" value="1"/>
</dbReference>
<dbReference type="InterPro" id="IPR023710">
    <property type="entry name" value="Phosphatase_YcdX_put"/>
</dbReference>
<dbReference type="InterPro" id="IPR004013">
    <property type="entry name" value="PHP_dom"/>
</dbReference>
<dbReference type="InterPro" id="IPR050243">
    <property type="entry name" value="PHP_phosphatase"/>
</dbReference>
<dbReference type="InterPro" id="IPR003141">
    <property type="entry name" value="Pol/His_phosphatase_N"/>
</dbReference>
<dbReference type="InterPro" id="IPR016195">
    <property type="entry name" value="Pol/histidinol_Pase-like"/>
</dbReference>
<dbReference type="NCBIfam" id="NF006702">
    <property type="entry name" value="PRK09248.1"/>
    <property type="match status" value="1"/>
</dbReference>
<dbReference type="PANTHER" id="PTHR36928">
    <property type="entry name" value="PHOSPHATASE YCDX-RELATED"/>
    <property type="match status" value="1"/>
</dbReference>
<dbReference type="PANTHER" id="PTHR36928:SF1">
    <property type="entry name" value="PHOSPHATASE YCDX-RELATED"/>
    <property type="match status" value="1"/>
</dbReference>
<dbReference type="Pfam" id="PF02811">
    <property type="entry name" value="PHP"/>
    <property type="match status" value="1"/>
</dbReference>
<dbReference type="SMART" id="SM00481">
    <property type="entry name" value="POLIIIAc"/>
    <property type="match status" value="1"/>
</dbReference>
<dbReference type="SUPFAM" id="SSF89550">
    <property type="entry name" value="PHP domain-like"/>
    <property type="match status" value="1"/>
</dbReference>
<accession>Q66AW1</accession>
<name>Y2019_YERPS</name>
<organism>
    <name type="scientific">Yersinia pseudotuberculosis serotype I (strain IP32953)</name>
    <dbReference type="NCBI Taxonomy" id="273123"/>
    <lineage>
        <taxon>Bacteria</taxon>
        <taxon>Pseudomonadati</taxon>
        <taxon>Pseudomonadota</taxon>
        <taxon>Gammaproteobacteria</taxon>
        <taxon>Enterobacterales</taxon>
        <taxon>Yersiniaceae</taxon>
        <taxon>Yersinia</taxon>
    </lineage>
</organism>